<protein>
    <recommendedName>
        <fullName evidence="1">Lipid-A-disaccharide synthase</fullName>
        <ecNumber evidence="1">2.4.1.182</ecNumber>
    </recommendedName>
</protein>
<evidence type="ECO:0000255" key="1">
    <source>
        <dbReference type="HAMAP-Rule" id="MF_00392"/>
    </source>
</evidence>
<proteinExistence type="inferred from homology"/>
<keyword id="KW-0328">Glycosyltransferase</keyword>
<keyword id="KW-0441">Lipid A biosynthesis</keyword>
<keyword id="KW-0444">Lipid biosynthesis</keyword>
<keyword id="KW-0443">Lipid metabolism</keyword>
<keyword id="KW-0808">Transferase</keyword>
<sequence length="393" mass="43020">MSLSIGMVAGEPSGDLLASRVIAGLRRDETVQCQGIGGPAMQAAGFDAWHPMHALTVFGYVDALKRLPSLLRTYGDVKRRWLASPPSVFVGVDAPDFNLKLELALRQAGTPTVHFVGPSIWAWRYERIHKIREAVSHMLVLFPFEEELYRKEGIPVTYVGHPLADAIPMQPDRAAARQRLGLDADARVLAILPGSRSSEIRILAPRFLQAAQQLQRRDPGLVCVVPMVNAQRRAEFEAILAQYPVPGLRCLTAEDAASGGLPVAWSALEASNAVLVASGTATLEAALFKRPMVISYYLSPWMRRIMAWKSGQQRPYLPWVGLPNVLLRDFAVPELLQDDATPDKLAEATWAALTDDAQAARVEARFAAMHRDLTRDTATLAARAILEVAHGAA</sequence>
<comment type="function">
    <text evidence="1">Condensation of UDP-2,3-diacylglucosamine and 2,3-diacylglucosamine-1-phosphate to form lipid A disaccharide, a precursor of lipid A, a phosphorylated glycolipid that anchors the lipopolysaccharide to the outer membrane of the cell.</text>
</comment>
<comment type="catalytic activity">
    <reaction evidence="1">
        <text>a lipid X + a UDP-2-N,3-O-bis[(3R)-3-hydroxyacyl]-alpha-D-glucosamine = a lipid A disaccharide + UDP + H(+)</text>
        <dbReference type="Rhea" id="RHEA:67828"/>
        <dbReference type="ChEBI" id="CHEBI:15378"/>
        <dbReference type="ChEBI" id="CHEBI:58223"/>
        <dbReference type="ChEBI" id="CHEBI:137748"/>
        <dbReference type="ChEBI" id="CHEBI:176338"/>
        <dbReference type="ChEBI" id="CHEBI:176343"/>
        <dbReference type="EC" id="2.4.1.182"/>
    </reaction>
</comment>
<comment type="pathway">
    <text evidence="1">Bacterial outer membrane biogenesis; LPS lipid A biosynthesis.</text>
</comment>
<comment type="similarity">
    <text evidence="1">Belongs to the LpxB family.</text>
</comment>
<accession>A9INR9</accession>
<feature type="chain" id="PRO_1000191462" description="Lipid-A-disaccharide synthase">
    <location>
        <begin position="1"/>
        <end position="393"/>
    </location>
</feature>
<name>LPXB_BORPD</name>
<organism>
    <name type="scientific">Bordetella petrii (strain ATCC BAA-461 / DSM 12804 / CCUG 43448)</name>
    <dbReference type="NCBI Taxonomy" id="340100"/>
    <lineage>
        <taxon>Bacteria</taxon>
        <taxon>Pseudomonadati</taxon>
        <taxon>Pseudomonadota</taxon>
        <taxon>Betaproteobacteria</taxon>
        <taxon>Burkholderiales</taxon>
        <taxon>Alcaligenaceae</taxon>
        <taxon>Bordetella</taxon>
    </lineage>
</organism>
<gene>
    <name evidence="1" type="primary">lpxB</name>
    <name type="ordered locus">Bpet2522</name>
</gene>
<reference key="1">
    <citation type="journal article" date="2008" name="BMC Genomics">
        <title>The missing link: Bordetella petrii is endowed with both the metabolic versatility of environmental bacteria and virulence traits of pathogenic Bordetellae.</title>
        <authorList>
            <person name="Gross R."/>
            <person name="Guzman C.A."/>
            <person name="Sebaihia M."/>
            <person name="Martin dos Santos V.A.P."/>
            <person name="Pieper D.H."/>
            <person name="Koebnik R."/>
            <person name="Lechner M."/>
            <person name="Bartels D."/>
            <person name="Buhrmester J."/>
            <person name="Choudhuri J.V."/>
            <person name="Ebensen T."/>
            <person name="Gaigalat L."/>
            <person name="Herrmann S."/>
            <person name="Khachane A.N."/>
            <person name="Larisch C."/>
            <person name="Link S."/>
            <person name="Linke B."/>
            <person name="Meyer F."/>
            <person name="Mormann S."/>
            <person name="Nakunst D."/>
            <person name="Rueckert C."/>
            <person name="Schneiker-Bekel S."/>
            <person name="Schulze K."/>
            <person name="Voerholter F.-J."/>
            <person name="Yevsa T."/>
            <person name="Engle J.T."/>
            <person name="Goldman W.E."/>
            <person name="Puehler A."/>
            <person name="Goebel U.B."/>
            <person name="Goesmann A."/>
            <person name="Bloecker H."/>
            <person name="Kaiser O."/>
            <person name="Martinez-Arias R."/>
        </authorList>
    </citation>
    <scope>NUCLEOTIDE SEQUENCE [LARGE SCALE GENOMIC DNA]</scope>
    <source>
        <strain>ATCC BAA-461 / DSM 12804 / CCUG 43448</strain>
    </source>
</reference>
<dbReference type="EC" id="2.4.1.182" evidence="1"/>
<dbReference type="EMBL" id="AM902716">
    <property type="protein sequence ID" value="CAP42864.1"/>
    <property type="molecule type" value="Genomic_DNA"/>
</dbReference>
<dbReference type="SMR" id="A9INR9"/>
<dbReference type="STRING" id="94624.Bpet2522"/>
<dbReference type="KEGG" id="bpt:Bpet2522"/>
<dbReference type="eggNOG" id="COG0763">
    <property type="taxonomic scope" value="Bacteria"/>
</dbReference>
<dbReference type="UniPathway" id="UPA00973"/>
<dbReference type="Proteomes" id="UP000001225">
    <property type="component" value="Chromosome"/>
</dbReference>
<dbReference type="GO" id="GO:0016020">
    <property type="term" value="C:membrane"/>
    <property type="evidence" value="ECO:0007669"/>
    <property type="project" value="GOC"/>
</dbReference>
<dbReference type="GO" id="GO:0008915">
    <property type="term" value="F:lipid-A-disaccharide synthase activity"/>
    <property type="evidence" value="ECO:0007669"/>
    <property type="project" value="UniProtKB-UniRule"/>
</dbReference>
<dbReference type="GO" id="GO:0005543">
    <property type="term" value="F:phospholipid binding"/>
    <property type="evidence" value="ECO:0007669"/>
    <property type="project" value="TreeGrafter"/>
</dbReference>
<dbReference type="GO" id="GO:0009245">
    <property type="term" value="P:lipid A biosynthetic process"/>
    <property type="evidence" value="ECO:0007669"/>
    <property type="project" value="UniProtKB-UniRule"/>
</dbReference>
<dbReference type="HAMAP" id="MF_00392">
    <property type="entry name" value="LpxB"/>
    <property type="match status" value="1"/>
</dbReference>
<dbReference type="InterPro" id="IPR003835">
    <property type="entry name" value="Glyco_trans_19"/>
</dbReference>
<dbReference type="NCBIfam" id="TIGR00215">
    <property type="entry name" value="lpxB"/>
    <property type="match status" value="1"/>
</dbReference>
<dbReference type="PANTHER" id="PTHR30372">
    <property type="entry name" value="LIPID-A-DISACCHARIDE SYNTHASE"/>
    <property type="match status" value="1"/>
</dbReference>
<dbReference type="PANTHER" id="PTHR30372:SF4">
    <property type="entry name" value="LIPID-A-DISACCHARIDE SYNTHASE, MITOCHONDRIAL-RELATED"/>
    <property type="match status" value="1"/>
</dbReference>
<dbReference type="Pfam" id="PF02684">
    <property type="entry name" value="LpxB"/>
    <property type="match status" value="1"/>
</dbReference>
<dbReference type="SUPFAM" id="SSF53756">
    <property type="entry name" value="UDP-Glycosyltransferase/glycogen phosphorylase"/>
    <property type="match status" value="1"/>
</dbReference>